<gene>
    <name evidence="1" type="primary">kal</name>
    <name type="ordered locus">CLOST_1385</name>
</gene>
<keyword id="KW-0456">Lyase</keyword>
<keyword id="KW-1185">Reference proteome</keyword>
<sequence length="126" mass="13845">MKSVLKIRMSAHDAHYGGGLVDGARMLQLFGDVATELLIMNDGDEGLFKAYDMVEFMAPVFAGDYIEVEGSITEQGNTSRKMIFEARKVIVPRTDINDSACDVLETPIVVCRASGTCVVPKDKQRK</sequence>
<name>KAL_ACESD</name>
<comment type="function">
    <text evidence="1">Involved in the anaerobic fermentation of lysine. Catalyzes the deamination of L-3-aminobutyryl-CoA to produce crotonoyl-CoA.</text>
</comment>
<comment type="catalytic activity">
    <reaction evidence="1">
        <text>(3S)-3-aminobutanoyl-CoA = (2E)-butenoyl-CoA + NH4(+)</text>
        <dbReference type="Rhea" id="RHEA:10056"/>
        <dbReference type="ChEBI" id="CHEBI:28938"/>
        <dbReference type="ChEBI" id="CHEBI:57332"/>
        <dbReference type="ChEBI" id="CHEBI:57366"/>
        <dbReference type="EC" id="4.3.1.14"/>
    </reaction>
</comment>
<comment type="pathway">
    <text evidence="1">Amino-acid degradation; L-lysine degradation via acetate pathway.</text>
</comment>
<comment type="subunit">
    <text evidence="1">Homohexamer.</text>
</comment>
<comment type="similarity">
    <text evidence="3">Belongs to the KAL family.</text>
</comment>
<feature type="chain" id="PRO_0000416978" description="3-aminobutyryl-CoA ammonia lyase">
    <location>
        <begin position="1"/>
        <end position="126"/>
    </location>
</feature>
<protein>
    <recommendedName>
        <fullName evidence="1">3-aminobutyryl-CoA ammonia lyase</fullName>
        <ecNumber evidence="1">4.3.1.14</ecNumber>
    </recommendedName>
    <alternativeName>
        <fullName evidence="1">3-aminobutyryl-CoA deaminase</fullName>
    </alternativeName>
</protein>
<accession>E3PRK1</accession>
<organism>
    <name type="scientific">Acetoanaerobium sticklandii (strain ATCC 12662 / DSM 519 / JCM 1433 / CCUG 9281 / NCIMB 10654 / HF)</name>
    <name type="common">Clostridium sticklandii</name>
    <dbReference type="NCBI Taxonomy" id="499177"/>
    <lineage>
        <taxon>Bacteria</taxon>
        <taxon>Bacillati</taxon>
        <taxon>Bacillota</taxon>
        <taxon>Clostridia</taxon>
        <taxon>Peptostreptococcales</taxon>
        <taxon>Filifactoraceae</taxon>
        <taxon>Acetoanaerobium</taxon>
    </lineage>
</organism>
<proteinExistence type="inferred from homology"/>
<evidence type="ECO:0000250" key="1">
    <source>
        <dbReference type="UniProtKB" id="Q8RHX1"/>
    </source>
</evidence>
<evidence type="ECO:0000269" key="2">
    <source>
    </source>
</evidence>
<evidence type="ECO:0000305" key="3"/>
<dbReference type="EC" id="4.3.1.14" evidence="1"/>
<dbReference type="EMBL" id="FP565809">
    <property type="protein sequence ID" value="CBH21505.1"/>
    <property type="molecule type" value="Genomic_DNA"/>
</dbReference>
<dbReference type="SMR" id="E3PRK1"/>
<dbReference type="STRING" id="1511.CLOST_1385"/>
<dbReference type="KEGG" id="cst:CLOST_1385"/>
<dbReference type="eggNOG" id="COG1607">
    <property type="taxonomic scope" value="Bacteria"/>
</dbReference>
<dbReference type="HOGENOM" id="CLU_149200_0_0_9"/>
<dbReference type="UniPathway" id="UPA00870"/>
<dbReference type="Proteomes" id="UP000007041">
    <property type="component" value="Chromosome"/>
</dbReference>
<dbReference type="GO" id="GO:0047459">
    <property type="term" value="F:3-aminobutyryl-CoA ammonia-lyase activity"/>
    <property type="evidence" value="ECO:0007669"/>
    <property type="project" value="UniProtKB-EC"/>
</dbReference>
<dbReference type="GO" id="GO:0019475">
    <property type="term" value="P:L-lysine catabolic process to acetate"/>
    <property type="evidence" value="ECO:0007669"/>
    <property type="project" value="UniProtKB-UniPathway"/>
</dbReference>
<dbReference type="CDD" id="cd03440">
    <property type="entry name" value="hot_dog"/>
    <property type="match status" value="1"/>
</dbReference>
<dbReference type="Gene3D" id="3.10.129.10">
    <property type="entry name" value="Hotdog Thioesterase"/>
    <property type="match status" value="1"/>
</dbReference>
<dbReference type="InterPro" id="IPR029069">
    <property type="entry name" value="HotDog_dom_sf"/>
</dbReference>
<dbReference type="InterPro" id="IPR006683">
    <property type="entry name" value="Thioestr_dom"/>
</dbReference>
<dbReference type="Pfam" id="PF03061">
    <property type="entry name" value="4HBT"/>
    <property type="match status" value="1"/>
</dbReference>
<dbReference type="SUPFAM" id="SSF54637">
    <property type="entry name" value="Thioesterase/thiol ester dehydrase-isomerase"/>
    <property type="match status" value="1"/>
</dbReference>
<reference key="1">
    <citation type="journal article" date="2010" name="BMC Genomics">
        <title>Clostridium sticklandii, a specialist in amino acid degradation:revisiting its metabolism through its genome sequence.</title>
        <authorList>
            <person name="Fonknechten N."/>
            <person name="Chaussonnerie S."/>
            <person name="Tricot S."/>
            <person name="Lajus A."/>
            <person name="Andreesen J.R."/>
            <person name="Perchat N."/>
            <person name="Pelletier E."/>
            <person name="Gouyvenoux M."/>
            <person name="Barbe V."/>
            <person name="Salanoubat M."/>
            <person name="Le Paslier D."/>
            <person name="Weissenbach J."/>
            <person name="Cohen G.N."/>
            <person name="Kreimeyer A."/>
        </authorList>
    </citation>
    <scope>NUCLEOTIDE SEQUENCE [LARGE SCALE GENOMIC DNA]</scope>
    <source>
        <strain evidence="2">ATCC 12662 / DSM 519 / JCM 1433 / CCUG 9281 / NCIMB 10654 / HF</strain>
    </source>
</reference>